<evidence type="ECO:0000255" key="1"/>
<evidence type="ECO:0000269" key="2">
    <source>
    </source>
</evidence>
<evidence type="ECO:0000269" key="3">
    <source>
    </source>
</evidence>
<evidence type="ECO:0000269" key="4">
    <source>
    </source>
</evidence>
<evidence type="ECO:0000269" key="5">
    <source>
    </source>
</evidence>
<evidence type="ECO:0000303" key="6">
    <source>
    </source>
</evidence>
<evidence type="ECO:0000305" key="7"/>
<evidence type="ECO:0000305" key="8">
    <source>
    </source>
</evidence>
<evidence type="ECO:0000305" key="9">
    <source>
    </source>
</evidence>
<evidence type="ECO:0000312" key="10">
    <source>
        <dbReference type="MGI" id="MGI:1916813"/>
    </source>
</evidence>
<protein>
    <recommendedName>
        <fullName evidence="6">Myoregulin</fullName>
    </recommendedName>
</protein>
<organism>
    <name type="scientific">Mus musculus</name>
    <name type="common">Mouse</name>
    <dbReference type="NCBI Taxonomy" id="10090"/>
    <lineage>
        <taxon>Eukaryota</taxon>
        <taxon>Metazoa</taxon>
        <taxon>Chordata</taxon>
        <taxon>Craniata</taxon>
        <taxon>Vertebrata</taxon>
        <taxon>Euteleostomi</taxon>
        <taxon>Mammalia</taxon>
        <taxon>Eutheria</taxon>
        <taxon>Euarchontoglires</taxon>
        <taxon>Glires</taxon>
        <taxon>Rodentia</taxon>
        <taxon>Myomorpha</taxon>
        <taxon>Muroidea</taxon>
        <taxon>Muridae</taxon>
        <taxon>Murinae</taxon>
        <taxon>Mus</taxon>
        <taxon>Mus</taxon>
    </lineage>
</organism>
<gene>
    <name evidence="10" type="primary">Mrln</name>
    <name evidence="6" type="synonym">Mln</name>
</gene>
<keyword id="KW-0472">Membrane</keyword>
<keyword id="KW-1185">Reference proteome</keyword>
<keyword id="KW-0703">Sarcoplasmic reticulum</keyword>
<keyword id="KW-0812">Transmembrane</keyword>
<keyword id="KW-1133">Transmembrane helix</keyword>
<accession>Q9CV60</accession>
<proteinExistence type="evidence at protein level"/>
<name>MLN_MOUSE</name>
<reference key="1">
    <citation type="journal article" date="2005" name="Science">
        <title>The transcriptional landscape of the mammalian genome.</title>
        <authorList>
            <person name="Carninci P."/>
            <person name="Kasukawa T."/>
            <person name="Katayama S."/>
            <person name="Gough J."/>
            <person name="Frith M.C."/>
            <person name="Maeda N."/>
            <person name="Oyama R."/>
            <person name="Ravasi T."/>
            <person name="Lenhard B."/>
            <person name="Wells C."/>
            <person name="Kodzius R."/>
            <person name="Shimokawa K."/>
            <person name="Bajic V.B."/>
            <person name="Brenner S.E."/>
            <person name="Batalov S."/>
            <person name="Forrest A.R."/>
            <person name="Zavolan M."/>
            <person name="Davis M.J."/>
            <person name="Wilming L.G."/>
            <person name="Aidinis V."/>
            <person name="Allen J.E."/>
            <person name="Ambesi-Impiombato A."/>
            <person name="Apweiler R."/>
            <person name="Aturaliya R.N."/>
            <person name="Bailey T.L."/>
            <person name="Bansal M."/>
            <person name="Baxter L."/>
            <person name="Beisel K.W."/>
            <person name="Bersano T."/>
            <person name="Bono H."/>
            <person name="Chalk A.M."/>
            <person name="Chiu K.P."/>
            <person name="Choudhary V."/>
            <person name="Christoffels A."/>
            <person name="Clutterbuck D.R."/>
            <person name="Crowe M.L."/>
            <person name="Dalla E."/>
            <person name="Dalrymple B.P."/>
            <person name="de Bono B."/>
            <person name="Della Gatta G."/>
            <person name="di Bernardo D."/>
            <person name="Down T."/>
            <person name="Engstrom P."/>
            <person name="Fagiolini M."/>
            <person name="Faulkner G."/>
            <person name="Fletcher C.F."/>
            <person name="Fukushima T."/>
            <person name="Furuno M."/>
            <person name="Futaki S."/>
            <person name="Gariboldi M."/>
            <person name="Georgii-Hemming P."/>
            <person name="Gingeras T.R."/>
            <person name="Gojobori T."/>
            <person name="Green R.E."/>
            <person name="Gustincich S."/>
            <person name="Harbers M."/>
            <person name="Hayashi Y."/>
            <person name="Hensch T.K."/>
            <person name="Hirokawa N."/>
            <person name="Hill D."/>
            <person name="Huminiecki L."/>
            <person name="Iacono M."/>
            <person name="Ikeo K."/>
            <person name="Iwama A."/>
            <person name="Ishikawa T."/>
            <person name="Jakt M."/>
            <person name="Kanapin A."/>
            <person name="Katoh M."/>
            <person name="Kawasawa Y."/>
            <person name="Kelso J."/>
            <person name="Kitamura H."/>
            <person name="Kitano H."/>
            <person name="Kollias G."/>
            <person name="Krishnan S.P."/>
            <person name="Kruger A."/>
            <person name="Kummerfeld S.K."/>
            <person name="Kurochkin I.V."/>
            <person name="Lareau L.F."/>
            <person name="Lazarevic D."/>
            <person name="Lipovich L."/>
            <person name="Liu J."/>
            <person name="Liuni S."/>
            <person name="McWilliam S."/>
            <person name="Madan Babu M."/>
            <person name="Madera M."/>
            <person name="Marchionni L."/>
            <person name="Matsuda H."/>
            <person name="Matsuzawa S."/>
            <person name="Miki H."/>
            <person name="Mignone F."/>
            <person name="Miyake S."/>
            <person name="Morris K."/>
            <person name="Mottagui-Tabar S."/>
            <person name="Mulder N."/>
            <person name="Nakano N."/>
            <person name="Nakauchi H."/>
            <person name="Ng P."/>
            <person name="Nilsson R."/>
            <person name="Nishiguchi S."/>
            <person name="Nishikawa S."/>
            <person name="Nori F."/>
            <person name="Ohara O."/>
            <person name="Okazaki Y."/>
            <person name="Orlando V."/>
            <person name="Pang K.C."/>
            <person name="Pavan W.J."/>
            <person name="Pavesi G."/>
            <person name="Pesole G."/>
            <person name="Petrovsky N."/>
            <person name="Piazza S."/>
            <person name="Reed J."/>
            <person name="Reid J.F."/>
            <person name="Ring B.Z."/>
            <person name="Ringwald M."/>
            <person name="Rost B."/>
            <person name="Ruan Y."/>
            <person name="Salzberg S.L."/>
            <person name="Sandelin A."/>
            <person name="Schneider C."/>
            <person name="Schoenbach C."/>
            <person name="Sekiguchi K."/>
            <person name="Semple C.A."/>
            <person name="Seno S."/>
            <person name="Sessa L."/>
            <person name="Sheng Y."/>
            <person name="Shibata Y."/>
            <person name="Shimada H."/>
            <person name="Shimada K."/>
            <person name="Silva D."/>
            <person name="Sinclair B."/>
            <person name="Sperling S."/>
            <person name="Stupka E."/>
            <person name="Sugiura K."/>
            <person name="Sultana R."/>
            <person name="Takenaka Y."/>
            <person name="Taki K."/>
            <person name="Tammoja K."/>
            <person name="Tan S.L."/>
            <person name="Tang S."/>
            <person name="Taylor M.S."/>
            <person name="Tegner J."/>
            <person name="Teichmann S.A."/>
            <person name="Ueda H.R."/>
            <person name="van Nimwegen E."/>
            <person name="Verardo R."/>
            <person name="Wei C.L."/>
            <person name="Yagi K."/>
            <person name="Yamanishi H."/>
            <person name="Zabarovsky E."/>
            <person name="Zhu S."/>
            <person name="Zimmer A."/>
            <person name="Hide W."/>
            <person name="Bult C."/>
            <person name="Grimmond S.M."/>
            <person name="Teasdale R.D."/>
            <person name="Liu E.T."/>
            <person name="Brusic V."/>
            <person name="Quackenbush J."/>
            <person name="Wahlestedt C."/>
            <person name="Mattick J.S."/>
            <person name="Hume D.A."/>
            <person name="Kai C."/>
            <person name="Sasaki D."/>
            <person name="Tomaru Y."/>
            <person name="Fukuda S."/>
            <person name="Kanamori-Katayama M."/>
            <person name="Suzuki M."/>
            <person name="Aoki J."/>
            <person name="Arakawa T."/>
            <person name="Iida J."/>
            <person name="Imamura K."/>
            <person name="Itoh M."/>
            <person name="Kato T."/>
            <person name="Kawaji H."/>
            <person name="Kawagashira N."/>
            <person name="Kawashima T."/>
            <person name="Kojima M."/>
            <person name="Kondo S."/>
            <person name="Konno H."/>
            <person name="Nakano K."/>
            <person name="Ninomiya N."/>
            <person name="Nishio T."/>
            <person name="Okada M."/>
            <person name="Plessy C."/>
            <person name="Shibata K."/>
            <person name="Shiraki T."/>
            <person name="Suzuki S."/>
            <person name="Tagami M."/>
            <person name="Waki K."/>
            <person name="Watahiki A."/>
            <person name="Okamura-Oho Y."/>
            <person name="Suzuki H."/>
            <person name="Kawai J."/>
            <person name="Hayashizaki Y."/>
        </authorList>
    </citation>
    <scope>NUCLEOTIDE SEQUENCE [LARGE SCALE MRNA]</scope>
    <source>
        <strain>C57BL/6J</strain>
        <tissue>Tongue</tissue>
    </source>
</reference>
<reference key="2">
    <citation type="submission" date="2005-09" db="EMBL/GenBank/DDBJ databases">
        <authorList>
            <person name="Mural R.J."/>
            <person name="Adams M.D."/>
            <person name="Myers E.W."/>
            <person name="Smith H.O."/>
            <person name="Venter J.C."/>
        </authorList>
    </citation>
    <scope>NUCLEOTIDE SEQUENCE [LARGE SCALE GENOMIC DNA]</scope>
</reference>
<reference key="3">
    <citation type="journal article" date="2015" name="Cell">
        <title>A micropeptide encoded by a putative long noncoding RNA regulates muscle performance.</title>
        <authorList>
            <person name="Anderson D.M."/>
            <person name="Anderson K.M."/>
            <person name="Chang C.L."/>
            <person name="Makarewich C.A."/>
            <person name="Nelson B.R."/>
            <person name="McAnally J.R."/>
            <person name="Kasaragod P."/>
            <person name="Shelton J.M."/>
            <person name="Liou J."/>
            <person name="Bassel-Duby R."/>
            <person name="Olson E.N."/>
        </authorList>
    </citation>
    <scope>FUNCTION</scope>
    <scope>SUBCELLULAR LOCATION</scope>
    <scope>TISSUE SPECIFICITY</scope>
    <scope>DEVELOPMENTAL STAGE</scope>
    <scope>INDUCTION</scope>
    <scope>DISRUPTION PHENOTYPE</scope>
    <scope>INTERACTION WITH ATP2A1</scope>
    <scope>MUTAGENESIS OF LYS-27; LEU-29; PHE-30; PHE-33 AND ASP-35</scope>
</reference>
<reference key="4">
    <citation type="journal article" date="2016" name="Science">
        <title>Muscle physiology. A peptide encoded by a transcript annotated as long noncoding RNA enhances SERCA activity in muscle.</title>
        <authorList>
            <person name="Nelson B.R."/>
            <person name="Makarewich C.A."/>
            <person name="Anderson D.M."/>
            <person name="Winders B.R."/>
            <person name="Troupes C.D."/>
            <person name="Wu F."/>
            <person name="Reese A.L."/>
            <person name="McAnally J.R."/>
            <person name="Chen X."/>
            <person name="Kavalali E.T."/>
            <person name="Cannon S.C."/>
            <person name="Houser S.R."/>
            <person name="Bassel-Duby R."/>
            <person name="Olson E.N."/>
        </authorList>
    </citation>
    <scope>FUNCTION</scope>
</reference>
<reference key="5">
    <citation type="journal article" date="2016" name="Sci. Signal.">
        <title>Widespread control of calcium signaling by a family of SERCA-inhibiting micropeptides.</title>
        <authorList>
            <person name="Anderson D.M."/>
            <person name="Makarewich C.A."/>
            <person name="Anderson K.M."/>
            <person name="Shelton J.M."/>
            <person name="Bezprozvannaya S."/>
            <person name="Bassel-Duby R."/>
            <person name="Olson E.N."/>
        </authorList>
    </citation>
    <scope>FUNCTION</scope>
    <scope>INTERACTION WITH ATP2A2</scope>
    <scope>SUBCELLULAR LOCATION</scope>
    <scope>TISSUE SPECIFICITY</scope>
</reference>
<reference key="6">
    <citation type="journal article" date="2019" name="J. Mol. Biol.">
        <title>Newly Discovered Micropeptide Regulators of SERCA Form Oligomers but Bind to the Pump as Monomers.</title>
        <authorList>
            <person name="Singh D.R."/>
            <person name="Dalton M.P."/>
            <person name="Cho E.E."/>
            <person name="Pribadi M.P."/>
            <person name="Zak T.J."/>
            <person name="Seflova J."/>
            <person name="Makarewich C.A."/>
            <person name="Olson E.N."/>
            <person name="Robia S.L."/>
        </authorList>
    </citation>
    <scope>FUNCTION</scope>
    <scope>SUBUNIT</scope>
    <scope>INTERACTION WITH ATP2A2</scope>
</reference>
<feature type="chain" id="PRO_0000432709" description="Myoregulin">
    <location>
        <begin position="1"/>
        <end position="46"/>
    </location>
</feature>
<feature type="topological domain" description="Cytoplasmic" evidence="7">
    <location>
        <begin position="1"/>
        <end position="21"/>
    </location>
</feature>
<feature type="transmembrane region" description="Helical" evidence="1">
    <location>
        <begin position="22"/>
        <end position="42"/>
    </location>
</feature>
<feature type="topological domain" description="Lumenal" evidence="7">
    <location>
        <begin position="43"/>
        <end position="46"/>
    </location>
</feature>
<feature type="mutagenesis site" description="Does not affect interaction with ATP2A1." evidence="2">
    <original>K</original>
    <variation>A</variation>
    <location>
        <position position="27"/>
    </location>
</feature>
<feature type="mutagenesis site" description="Abolishes interaction with ATP2A1/SERCA1." evidence="2">
    <original>L</original>
    <variation>A</variation>
    <location>
        <position position="29"/>
    </location>
</feature>
<feature type="mutagenesis site" description="Abolishes interaction with ATP2A1/SERCA1." evidence="2">
    <original>F</original>
    <variation>A</variation>
    <location>
        <position position="30"/>
    </location>
</feature>
<feature type="mutagenesis site" description="Abolishes interaction with ATP2A1/SERCA1." evidence="2">
    <original>F</original>
    <variation>A</variation>
    <location>
        <position position="33"/>
    </location>
</feature>
<feature type="mutagenesis site" description="Does not affect interaction with ATP2A1." evidence="2">
    <original>D</original>
    <variation>A</variation>
    <location>
        <position position="35"/>
    </location>
</feature>
<comment type="function">
    <text evidence="2 3 4 5">Inhibits the activity of ATP2A1/SERCA1 ATPase in sarcoplasmic reticulum by decreasing the apparent affinity of the ATPase for Ca(2+), thereby acting as a key regulator of skeletal muscle activity. Its high expression in adult skeletal muscle, suggests that it constitutes the predominant regulator of ATP2A1/SERCA1 in adult skeletal muscle (PubMed:25640239, PubMed:26816378). Also inhibits the activity of ATP2A2/SERCA2 and ATP2A3/SERCA3 (PubMed:27923914, PubMed:31449798).</text>
</comment>
<comment type="subunit">
    <text evidence="2 4 5">Homooligomer (PubMed:31449798). Monomer (PubMed:31449798). Interacts with ATP2A1/SERCA1 (PubMed:25640239). Interacts as a monomer with ATP2A2/SERCA2; the interaction inhibits ATP2A2 activity (PubMed:27923914, PubMed:31449798).</text>
</comment>
<comment type="subcellular location">
    <subcellularLocation>
        <location evidence="2 9">Sarcoplasmic reticulum membrane</location>
        <topology evidence="8">Single-pass membrane protein</topology>
    </subcellularLocation>
</comment>
<comment type="tissue specificity">
    <text evidence="2 4">Specifically expressed in all skeletal muscles (PubMed:25640239). Detected in both fast- and slow-type skeletal muscle (PubMed:27923914). Not expressed in cardiac or smooth muscles (PubMed:25640239).</text>
</comment>
<comment type="developmental stage">
    <text evidence="2">During embryogenesis, expressed in the myotomal compartment of the somites and the anlagen of skeletal muscle. During fetal and adult stages, strongly expressed in all skeletal muscles. Not detectable in cardiac or smooth muscles.</text>
</comment>
<comment type="induction">
    <text evidence="2">Expression is regulated by MYEF2 and MYOD1.</text>
</comment>
<comment type="disruption phenotype">
    <text evidence="2">Mice are born at expected Mendelian ratios and do not show obvious morphological abnormalities or differences in body or muscle weights. They however show enhanced Ca(2+) handling in skeletal muscle and improved exercise performance.</text>
</comment>
<comment type="sequence caution" evidence="7">
    <conflict type="erroneous initiation">
        <sequence resource="EMBL-CDS" id="BAB26234"/>
    </conflict>
    <text>Extended N-terminus.</text>
</comment>
<comment type="sequence caution" evidence="7">
    <conflict type="erroneous gene model prediction">
        <sequence resource="EMBL-CDS" id="EDL31981"/>
    </conflict>
</comment>
<dbReference type="EMBL" id="AK009351">
    <property type="protein sequence ID" value="BAB26234.1"/>
    <property type="status" value="ALT_INIT"/>
    <property type="molecule type" value="mRNA"/>
</dbReference>
<dbReference type="EMBL" id="CH466553">
    <property type="protein sequence ID" value="EDL31981.1"/>
    <property type="status" value="ALT_SEQ"/>
    <property type="molecule type" value="Genomic_DNA"/>
</dbReference>
<dbReference type="CCDS" id="CCDS88021.1"/>
<dbReference type="RefSeq" id="NP_001291668.1">
    <property type="nucleotide sequence ID" value="NM_001304739.1"/>
</dbReference>
<dbReference type="RefSeq" id="XP_017169565.1">
    <property type="nucleotide sequence ID" value="XM_017314076.2"/>
</dbReference>
<dbReference type="FunCoup" id="Q9CV60">
    <property type="interactions" value="245"/>
</dbReference>
<dbReference type="STRING" id="10090.ENSMUSP00000150523"/>
<dbReference type="Antibodypedia" id="82464">
    <property type="antibodies" value="8 antibodies from 2 providers"/>
</dbReference>
<dbReference type="Ensembl" id="ENSMUST00000020090.8">
    <property type="protein sequence ID" value="ENSMUSP00000150523.2"/>
    <property type="gene ID" value="ENSMUSG00000019933.8"/>
</dbReference>
<dbReference type="GeneID" id="69563"/>
<dbReference type="KEGG" id="mmu:69563"/>
<dbReference type="AGR" id="MGI:1916813"/>
<dbReference type="CTD" id="100507027"/>
<dbReference type="MGI" id="MGI:1916813">
    <property type="gene designation" value="Mrln"/>
</dbReference>
<dbReference type="VEuPathDB" id="HostDB:ENSMUSG00000019933"/>
<dbReference type="GeneTree" id="ENSGT01120000272118"/>
<dbReference type="InParanoid" id="Q9CV60"/>
<dbReference type="OrthoDB" id="47007at9989"/>
<dbReference type="BioGRID-ORCS" id="69563">
    <property type="hits" value="0 hits in 5 CRISPR screens"/>
</dbReference>
<dbReference type="ChiTaRS" id="Mrln">
    <property type="organism name" value="mouse"/>
</dbReference>
<dbReference type="PRO" id="PR:Q9CV60"/>
<dbReference type="Proteomes" id="UP000000589">
    <property type="component" value="Chromosome 10"/>
</dbReference>
<dbReference type="Bgee" id="ENSMUSG00000019933">
    <property type="expression patterns" value="Expressed in knee joint and 134 other cell types or tissues"/>
</dbReference>
<dbReference type="ExpressionAtlas" id="Q9CV60">
    <property type="expression patterns" value="baseline and differential"/>
</dbReference>
<dbReference type="GO" id="GO:0005789">
    <property type="term" value="C:endoplasmic reticulum membrane"/>
    <property type="evidence" value="ECO:0000314"/>
    <property type="project" value="MGI"/>
</dbReference>
<dbReference type="GO" id="GO:0033017">
    <property type="term" value="C:sarcoplasmic reticulum membrane"/>
    <property type="evidence" value="ECO:0000314"/>
    <property type="project" value="MGI"/>
</dbReference>
<dbReference type="GO" id="GO:0004857">
    <property type="term" value="F:enzyme inhibitor activity"/>
    <property type="evidence" value="ECO:0000314"/>
    <property type="project" value="UniProtKB"/>
</dbReference>
<dbReference type="GO" id="GO:1990036">
    <property type="term" value="P:calcium ion import into sarcoplasmic reticulum"/>
    <property type="evidence" value="ECO:0000315"/>
    <property type="project" value="MGI"/>
</dbReference>
<dbReference type="GO" id="GO:1902081">
    <property type="term" value="P:negative regulation of calcium ion import into sarcoplasmic reticulum"/>
    <property type="evidence" value="ECO:0000314"/>
    <property type="project" value="MGI"/>
</dbReference>
<dbReference type="GO" id="GO:0009611">
    <property type="term" value="P:response to wounding"/>
    <property type="evidence" value="ECO:0000270"/>
    <property type="project" value="MGI"/>
</dbReference>
<dbReference type="CDD" id="cd20260">
    <property type="entry name" value="Myoregulin"/>
    <property type="match status" value="1"/>
</dbReference>
<dbReference type="InterPro" id="IPR049526">
    <property type="entry name" value="Myoregulin"/>
</dbReference>
<sequence length="46" mass="5175">MSGKSWVLISTTSPQSLEDEILGRLLKILFVLFVDLMSIMYVVITS</sequence>